<name>GPMA_TREPA</name>
<keyword id="KW-0312">Gluconeogenesis</keyword>
<keyword id="KW-0324">Glycolysis</keyword>
<keyword id="KW-0413">Isomerase</keyword>
<keyword id="KW-1185">Reference proteome</keyword>
<proteinExistence type="inferred from homology"/>
<sequence length="251" mass="28358">MKLVLIRHGESEWNRLNLFTGWTDVPLTPRGESEAQEGGRVLQEAGFDFDLCYTSFLKRAIRTLNFVLQALDREWLPVHKSWKLNERHYGDLQGLNKTETAQKYGEQQVRVWRRSFDVAPPPLTVGDARCPHTQASYRGVCASGRTPVLPFTESLKDTVARVVPYFEEEIKPQMISGQRVLIVAHGNSLRALMKHIESLDETQIMEVNLPTGVPLVYEFEADFTLCGKRFLGNEADVAARAQAVADQGKSN</sequence>
<protein>
    <recommendedName>
        <fullName evidence="1">2,3-bisphosphoglycerate-dependent phosphoglycerate mutase</fullName>
        <shortName evidence="1">BPG-dependent PGAM</shortName>
        <shortName evidence="1">PGAM</shortName>
        <shortName evidence="1">Phosphoglyceromutase</shortName>
        <shortName evidence="1">dPGM</shortName>
        <ecNumber evidence="1">5.4.2.11</ecNumber>
    </recommendedName>
</protein>
<comment type="function">
    <text evidence="1">Catalyzes the interconversion of 2-phosphoglycerate and 3-phosphoglycerate.</text>
</comment>
<comment type="catalytic activity">
    <reaction evidence="1">
        <text>(2R)-2-phosphoglycerate = (2R)-3-phosphoglycerate</text>
        <dbReference type="Rhea" id="RHEA:15901"/>
        <dbReference type="ChEBI" id="CHEBI:58272"/>
        <dbReference type="ChEBI" id="CHEBI:58289"/>
        <dbReference type="EC" id="5.4.2.11"/>
    </reaction>
</comment>
<comment type="pathway">
    <text evidence="1">Carbohydrate degradation; glycolysis; pyruvate from D-glyceraldehyde 3-phosphate: step 3/5.</text>
</comment>
<comment type="similarity">
    <text evidence="1">Belongs to the phosphoglycerate mutase family. BPG-dependent PGAM subfamily.</text>
</comment>
<dbReference type="EC" id="5.4.2.11" evidence="1"/>
<dbReference type="EMBL" id="U55214">
    <property type="protein sequence ID" value="AAC45730.1"/>
    <property type="molecule type" value="Genomic_DNA"/>
</dbReference>
<dbReference type="EMBL" id="AE000520">
    <property type="protein sequence ID" value="AAC65158.1"/>
    <property type="molecule type" value="Genomic_DNA"/>
</dbReference>
<dbReference type="PIR" id="E71357">
    <property type="entry name" value="E71357"/>
</dbReference>
<dbReference type="RefSeq" id="WP_010881615.1">
    <property type="nucleotide sequence ID" value="NC_021490.2"/>
</dbReference>
<dbReference type="SMR" id="P96121"/>
<dbReference type="IntAct" id="P96121">
    <property type="interactions" value="1"/>
</dbReference>
<dbReference type="STRING" id="243276.TP_0168"/>
<dbReference type="EnsemblBacteria" id="AAC65158">
    <property type="protein sequence ID" value="AAC65158"/>
    <property type="gene ID" value="TP_0168"/>
</dbReference>
<dbReference type="GeneID" id="93875960"/>
<dbReference type="KEGG" id="tpa:TP_0168"/>
<dbReference type="KEGG" id="tpw:TPANIC_0168"/>
<dbReference type="eggNOG" id="COG0588">
    <property type="taxonomic scope" value="Bacteria"/>
</dbReference>
<dbReference type="HOGENOM" id="CLU_033323_1_1_12"/>
<dbReference type="OrthoDB" id="9781415at2"/>
<dbReference type="UniPathway" id="UPA00109">
    <property type="reaction ID" value="UER00186"/>
</dbReference>
<dbReference type="Proteomes" id="UP000000811">
    <property type="component" value="Chromosome"/>
</dbReference>
<dbReference type="GO" id="GO:0004619">
    <property type="term" value="F:phosphoglycerate mutase activity"/>
    <property type="evidence" value="ECO:0007669"/>
    <property type="project" value="UniProtKB-EC"/>
</dbReference>
<dbReference type="GO" id="GO:0006094">
    <property type="term" value="P:gluconeogenesis"/>
    <property type="evidence" value="ECO:0007669"/>
    <property type="project" value="UniProtKB-UniRule"/>
</dbReference>
<dbReference type="GO" id="GO:0006096">
    <property type="term" value="P:glycolytic process"/>
    <property type="evidence" value="ECO:0007669"/>
    <property type="project" value="UniProtKB-UniRule"/>
</dbReference>
<dbReference type="CDD" id="cd07067">
    <property type="entry name" value="HP_PGM_like"/>
    <property type="match status" value="1"/>
</dbReference>
<dbReference type="FunFam" id="3.40.50.1240:FF:000003">
    <property type="entry name" value="2,3-bisphosphoglycerate-dependent phosphoglycerate mutase"/>
    <property type="match status" value="1"/>
</dbReference>
<dbReference type="Gene3D" id="3.40.50.1240">
    <property type="entry name" value="Phosphoglycerate mutase-like"/>
    <property type="match status" value="1"/>
</dbReference>
<dbReference type="HAMAP" id="MF_01039">
    <property type="entry name" value="PGAM_GpmA"/>
    <property type="match status" value="1"/>
</dbReference>
<dbReference type="InterPro" id="IPR013078">
    <property type="entry name" value="His_Pase_superF_clade-1"/>
</dbReference>
<dbReference type="InterPro" id="IPR029033">
    <property type="entry name" value="His_PPase_superfam"/>
</dbReference>
<dbReference type="InterPro" id="IPR001345">
    <property type="entry name" value="PG/BPGM_mutase_AS"/>
</dbReference>
<dbReference type="InterPro" id="IPR005952">
    <property type="entry name" value="Phosphogly_mut1"/>
</dbReference>
<dbReference type="NCBIfam" id="TIGR01258">
    <property type="entry name" value="pgm_1"/>
    <property type="match status" value="1"/>
</dbReference>
<dbReference type="NCBIfam" id="NF010713">
    <property type="entry name" value="PRK14115.1"/>
    <property type="match status" value="1"/>
</dbReference>
<dbReference type="PANTHER" id="PTHR11931">
    <property type="entry name" value="PHOSPHOGLYCERATE MUTASE"/>
    <property type="match status" value="1"/>
</dbReference>
<dbReference type="Pfam" id="PF00300">
    <property type="entry name" value="His_Phos_1"/>
    <property type="match status" value="2"/>
</dbReference>
<dbReference type="PIRSF" id="PIRSF000709">
    <property type="entry name" value="6PFK_2-Ptase"/>
    <property type="match status" value="1"/>
</dbReference>
<dbReference type="SMART" id="SM00855">
    <property type="entry name" value="PGAM"/>
    <property type="match status" value="1"/>
</dbReference>
<dbReference type="SUPFAM" id="SSF53254">
    <property type="entry name" value="Phosphoglycerate mutase-like"/>
    <property type="match status" value="1"/>
</dbReference>
<dbReference type="PROSITE" id="PS00175">
    <property type="entry name" value="PG_MUTASE"/>
    <property type="match status" value="1"/>
</dbReference>
<feature type="chain" id="PRO_0000179934" description="2,3-bisphosphoglycerate-dependent phosphoglycerate mutase">
    <location>
        <begin position="1"/>
        <end position="251"/>
    </location>
</feature>
<feature type="active site" description="Tele-phosphohistidine intermediate" evidence="1">
    <location>
        <position position="8"/>
    </location>
</feature>
<feature type="active site" description="Proton donor/acceptor" evidence="1">
    <location>
        <position position="86"/>
    </location>
</feature>
<feature type="binding site" evidence="1">
    <location>
        <begin position="7"/>
        <end position="14"/>
    </location>
    <ligand>
        <name>substrate</name>
    </ligand>
</feature>
<feature type="binding site" evidence="1">
    <location>
        <begin position="20"/>
        <end position="21"/>
    </location>
    <ligand>
        <name>substrate</name>
    </ligand>
</feature>
<feature type="binding site" evidence="1">
    <location>
        <position position="59"/>
    </location>
    <ligand>
        <name>substrate</name>
    </ligand>
</feature>
<feature type="binding site" evidence="1">
    <location>
        <begin position="86"/>
        <end position="89"/>
    </location>
    <ligand>
        <name>substrate</name>
    </ligand>
</feature>
<feature type="binding site" evidence="1">
    <location>
        <position position="97"/>
    </location>
    <ligand>
        <name>substrate</name>
    </ligand>
</feature>
<feature type="binding site" evidence="1">
    <location>
        <begin position="113"/>
        <end position="114"/>
    </location>
    <ligand>
        <name>substrate</name>
    </ligand>
</feature>
<feature type="binding site" evidence="1">
    <location>
        <begin position="186"/>
        <end position="187"/>
    </location>
    <ligand>
        <name>substrate</name>
    </ligand>
</feature>
<feature type="site" description="Transition state stabilizer" evidence="1">
    <location>
        <position position="185"/>
    </location>
</feature>
<accession>P96121</accession>
<organism>
    <name type="scientific">Treponema pallidum (strain Nichols)</name>
    <dbReference type="NCBI Taxonomy" id="243276"/>
    <lineage>
        <taxon>Bacteria</taxon>
        <taxon>Pseudomonadati</taxon>
        <taxon>Spirochaetota</taxon>
        <taxon>Spirochaetia</taxon>
        <taxon>Spirochaetales</taxon>
        <taxon>Treponemataceae</taxon>
        <taxon>Treponema</taxon>
    </lineage>
</organism>
<evidence type="ECO:0000255" key="1">
    <source>
        <dbReference type="HAMAP-Rule" id="MF_01039"/>
    </source>
</evidence>
<reference key="1">
    <citation type="journal article" date="1997" name="Gene">
        <title>Identification and transcriptional analysis of a Treponema pallidum operon encoding a putative ABC transport system, an iron-activated repressor protein homolog, and a glycolytic pathway enzyme homolog.</title>
        <authorList>
            <person name="Hardham J.M."/>
            <person name="Stamm L.V."/>
            <person name="Porcella S.F."/>
            <person name="Frye J.G."/>
            <person name="Barnes N.Y."/>
            <person name="Howell J.K."/>
            <person name="Mueller S.L."/>
            <person name="Radolf J.D."/>
            <person name="Weinstock G.M."/>
            <person name="Norris S.J."/>
        </authorList>
    </citation>
    <scope>NUCLEOTIDE SEQUENCE [GENOMIC DNA]</scope>
</reference>
<reference key="2">
    <citation type="journal article" date="1998" name="Science">
        <title>Complete genome sequence of Treponema pallidum, the syphilis spirochete.</title>
        <authorList>
            <person name="Fraser C.M."/>
            <person name="Norris S.J."/>
            <person name="Weinstock G.M."/>
            <person name="White O."/>
            <person name="Sutton G.G."/>
            <person name="Dodson R.J."/>
            <person name="Gwinn M.L."/>
            <person name="Hickey E.K."/>
            <person name="Clayton R.A."/>
            <person name="Ketchum K.A."/>
            <person name="Sodergren E."/>
            <person name="Hardham J.M."/>
            <person name="McLeod M.P."/>
            <person name="Salzberg S.L."/>
            <person name="Peterson J.D."/>
            <person name="Khalak H.G."/>
            <person name="Richardson D.L."/>
            <person name="Howell J.K."/>
            <person name="Chidambaram M."/>
            <person name="Utterback T.R."/>
            <person name="McDonald L.A."/>
            <person name="Artiach P."/>
            <person name="Bowman C."/>
            <person name="Cotton M.D."/>
            <person name="Fujii C."/>
            <person name="Garland S.A."/>
            <person name="Hatch B."/>
            <person name="Horst K."/>
            <person name="Roberts K.M."/>
            <person name="Sandusky M."/>
            <person name="Weidman J.F."/>
            <person name="Smith H.O."/>
            <person name="Venter J.C."/>
        </authorList>
    </citation>
    <scope>NUCLEOTIDE SEQUENCE [LARGE SCALE GENOMIC DNA]</scope>
    <source>
        <strain>Nichols</strain>
    </source>
</reference>
<gene>
    <name evidence="1" type="primary">gpmA</name>
    <name type="synonym">gpm</name>
    <name type="synonym">pgm</name>
    <name type="ordered locus">TP_0168</name>
</gene>